<dbReference type="EMBL" id="CP000563">
    <property type="protein sequence ID" value="ABN60238.1"/>
    <property type="molecule type" value="Genomic_DNA"/>
</dbReference>
<dbReference type="RefSeq" id="WP_006080274.1">
    <property type="nucleotide sequence ID" value="NC_009052.1"/>
</dbReference>
<dbReference type="SMR" id="A3D0H5"/>
<dbReference type="STRING" id="325240.Sbal_0710"/>
<dbReference type="KEGG" id="sbl:Sbal_0710"/>
<dbReference type="HOGENOM" id="CLU_099839_1_0_6"/>
<dbReference type="OrthoDB" id="9801447at2"/>
<dbReference type="Proteomes" id="UP000001557">
    <property type="component" value="Chromosome"/>
</dbReference>
<dbReference type="GO" id="GO:0005829">
    <property type="term" value="C:cytosol"/>
    <property type="evidence" value="ECO:0007669"/>
    <property type="project" value="TreeGrafter"/>
</dbReference>
<dbReference type="GO" id="GO:0000166">
    <property type="term" value="F:nucleotide binding"/>
    <property type="evidence" value="ECO:0007669"/>
    <property type="project" value="TreeGrafter"/>
</dbReference>
<dbReference type="CDD" id="cd11740">
    <property type="entry name" value="YajQ_like"/>
    <property type="match status" value="1"/>
</dbReference>
<dbReference type="FunFam" id="3.30.70.860:FF:000001">
    <property type="entry name" value="UPF0234 protein YajQ"/>
    <property type="match status" value="1"/>
</dbReference>
<dbReference type="Gene3D" id="3.30.70.860">
    <property type="match status" value="1"/>
</dbReference>
<dbReference type="Gene3D" id="3.30.70.990">
    <property type="entry name" value="YajQ-like, domain 2"/>
    <property type="match status" value="1"/>
</dbReference>
<dbReference type="HAMAP" id="MF_00632">
    <property type="entry name" value="YajQ"/>
    <property type="match status" value="1"/>
</dbReference>
<dbReference type="InterPro" id="IPR007551">
    <property type="entry name" value="DUF520"/>
</dbReference>
<dbReference type="InterPro" id="IPR035571">
    <property type="entry name" value="UPF0234-like_C"/>
</dbReference>
<dbReference type="InterPro" id="IPR035570">
    <property type="entry name" value="UPF0234_N"/>
</dbReference>
<dbReference type="InterPro" id="IPR036183">
    <property type="entry name" value="YajQ-like_sf"/>
</dbReference>
<dbReference type="NCBIfam" id="NF003819">
    <property type="entry name" value="PRK05412.1"/>
    <property type="match status" value="1"/>
</dbReference>
<dbReference type="PANTHER" id="PTHR30476">
    <property type="entry name" value="UPF0234 PROTEIN YAJQ"/>
    <property type="match status" value="1"/>
</dbReference>
<dbReference type="PANTHER" id="PTHR30476:SF0">
    <property type="entry name" value="UPF0234 PROTEIN YAJQ"/>
    <property type="match status" value="1"/>
</dbReference>
<dbReference type="Pfam" id="PF04461">
    <property type="entry name" value="DUF520"/>
    <property type="match status" value="1"/>
</dbReference>
<dbReference type="SUPFAM" id="SSF89963">
    <property type="entry name" value="YajQ-like"/>
    <property type="match status" value="2"/>
</dbReference>
<sequence length="161" mass="18348">MPSMDIVSEVNEVELRNAVDNTKRELATRFDFRGKTADVEYKDHVVTLTAEDDFQCQQLVDILRMQLSKRNVDPSSMEVDEKAIHSGKTFSLKVKFKEGIETLIAKKLVKLIKDSKLKVQASIQGEKVRVTGKKRDDLQAVMALARESELGQPFQFDNFKD</sequence>
<evidence type="ECO:0000255" key="1">
    <source>
        <dbReference type="HAMAP-Rule" id="MF_00632"/>
    </source>
</evidence>
<protein>
    <recommendedName>
        <fullName evidence="1">Nucleotide-binding protein Sbal_0710</fullName>
    </recommendedName>
</protein>
<feature type="chain" id="PRO_1000051756" description="Nucleotide-binding protein Sbal_0710">
    <location>
        <begin position="1"/>
        <end position="161"/>
    </location>
</feature>
<proteinExistence type="inferred from homology"/>
<organism>
    <name type="scientific">Shewanella baltica (strain OS155 / ATCC BAA-1091)</name>
    <dbReference type="NCBI Taxonomy" id="325240"/>
    <lineage>
        <taxon>Bacteria</taxon>
        <taxon>Pseudomonadati</taxon>
        <taxon>Pseudomonadota</taxon>
        <taxon>Gammaproteobacteria</taxon>
        <taxon>Alteromonadales</taxon>
        <taxon>Shewanellaceae</taxon>
        <taxon>Shewanella</taxon>
    </lineage>
</organism>
<keyword id="KW-0547">Nucleotide-binding</keyword>
<keyword id="KW-1185">Reference proteome</keyword>
<accession>A3D0H5</accession>
<comment type="function">
    <text evidence="1">Nucleotide-binding protein.</text>
</comment>
<comment type="similarity">
    <text evidence="1">Belongs to the YajQ family.</text>
</comment>
<name>Y710_SHEB5</name>
<gene>
    <name type="ordered locus">Sbal_0710</name>
</gene>
<reference key="1">
    <citation type="submission" date="2007-02" db="EMBL/GenBank/DDBJ databases">
        <title>Complete sequence of chromosome of Shewanella baltica OS155.</title>
        <authorList>
            <consortium name="US DOE Joint Genome Institute"/>
            <person name="Copeland A."/>
            <person name="Lucas S."/>
            <person name="Lapidus A."/>
            <person name="Barry K."/>
            <person name="Detter J.C."/>
            <person name="Glavina del Rio T."/>
            <person name="Hammon N."/>
            <person name="Israni S."/>
            <person name="Dalin E."/>
            <person name="Tice H."/>
            <person name="Pitluck S."/>
            <person name="Sims D.R."/>
            <person name="Brettin T."/>
            <person name="Bruce D."/>
            <person name="Han C."/>
            <person name="Tapia R."/>
            <person name="Brainard J."/>
            <person name="Schmutz J."/>
            <person name="Larimer F."/>
            <person name="Land M."/>
            <person name="Hauser L."/>
            <person name="Kyrpides N."/>
            <person name="Mikhailova N."/>
            <person name="Brettar I."/>
            <person name="Klappenbach J."/>
            <person name="Konstantinidis K."/>
            <person name="Rodrigues J."/>
            <person name="Tiedje J."/>
            <person name="Richardson P."/>
        </authorList>
    </citation>
    <scope>NUCLEOTIDE SEQUENCE [LARGE SCALE GENOMIC DNA]</scope>
    <source>
        <strain>OS155 / ATCC BAA-1091</strain>
    </source>
</reference>